<feature type="chain" id="PRO_1000092121" description="4-diphosphocytidyl-2-C-methyl-D-erythritol kinase">
    <location>
        <begin position="1"/>
        <end position="291"/>
    </location>
</feature>
<feature type="active site" evidence="1">
    <location>
        <position position="11"/>
    </location>
</feature>
<feature type="active site" evidence="1">
    <location>
        <position position="136"/>
    </location>
</feature>
<feature type="binding site" evidence="1">
    <location>
        <begin position="94"/>
        <end position="104"/>
    </location>
    <ligand>
        <name>ATP</name>
        <dbReference type="ChEBI" id="CHEBI:30616"/>
    </ligand>
</feature>
<name>ISPE_TREPS</name>
<evidence type="ECO:0000255" key="1">
    <source>
        <dbReference type="HAMAP-Rule" id="MF_00061"/>
    </source>
</evidence>
<reference key="1">
    <citation type="journal article" date="2008" name="BMC Microbiol.">
        <title>Complete genome sequence of Treponema pallidum ssp. pallidum strain SS14 determined with oligonucleotide arrays.</title>
        <authorList>
            <person name="Matejkova P."/>
            <person name="Strouhal M."/>
            <person name="Smajs D."/>
            <person name="Norris S.J."/>
            <person name="Palzkill T."/>
            <person name="Petrosino J.F."/>
            <person name="Sodergren E."/>
            <person name="Norton J.E."/>
            <person name="Singh J."/>
            <person name="Richmond T.A."/>
            <person name="Molla M.N."/>
            <person name="Albert T.J."/>
            <person name="Weinstock G.M."/>
        </authorList>
    </citation>
    <scope>NUCLEOTIDE SEQUENCE [LARGE SCALE GENOMIC DNA]</scope>
    <source>
        <strain>SS14</strain>
    </source>
</reference>
<gene>
    <name evidence="1" type="primary">ispE</name>
    <name type="ordered locus">TPASS_0371</name>
</gene>
<organism>
    <name type="scientific">Treponema pallidum subsp. pallidum (strain SS14)</name>
    <dbReference type="NCBI Taxonomy" id="455434"/>
    <lineage>
        <taxon>Bacteria</taxon>
        <taxon>Pseudomonadati</taxon>
        <taxon>Spirochaetota</taxon>
        <taxon>Spirochaetia</taxon>
        <taxon>Spirochaetales</taxon>
        <taxon>Treponemataceae</taxon>
        <taxon>Treponema</taxon>
    </lineage>
</organism>
<accession>B2S2W8</accession>
<proteinExistence type="inferred from homology"/>
<dbReference type="EC" id="2.7.1.148" evidence="1"/>
<dbReference type="EMBL" id="CP000805">
    <property type="protein sequence ID" value="ACD70797.1"/>
    <property type="molecule type" value="Genomic_DNA"/>
</dbReference>
<dbReference type="RefSeq" id="WP_010881819.1">
    <property type="nucleotide sequence ID" value="NC_010741.1"/>
</dbReference>
<dbReference type="KEGG" id="tpp:TPASS_0371"/>
<dbReference type="PATRIC" id="fig|243276.5.peg.393"/>
<dbReference type="UniPathway" id="UPA00056">
    <property type="reaction ID" value="UER00094"/>
</dbReference>
<dbReference type="Proteomes" id="UP000001202">
    <property type="component" value="Chromosome"/>
</dbReference>
<dbReference type="GO" id="GO:0050515">
    <property type="term" value="F:4-(cytidine 5'-diphospho)-2-C-methyl-D-erythritol kinase activity"/>
    <property type="evidence" value="ECO:0007669"/>
    <property type="project" value="UniProtKB-UniRule"/>
</dbReference>
<dbReference type="GO" id="GO:0005524">
    <property type="term" value="F:ATP binding"/>
    <property type="evidence" value="ECO:0007669"/>
    <property type="project" value="UniProtKB-UniRule"/>
</dbReference>
<dbReference type="GO" id="GO:0019288">
    <property type="term" value="P:isopentenyl diphosphate biosynthetic process, methylerythritol 4-phosphate pathway"/>
    <property type="evidence" value="ECO:0007669"/>
    <property type="project" value="UniProtKB-UniRule"/>
</dbReference>
<dbReference type="GO" id="GO:0016114">
    <property type="term" value="P:terpenoid biosynthetic process"/>
    <property type="evidence" value="ECO:0007669"/>
    <property type="project" value="InterPro"/>
</dbReference>
<dbReference type="Gene3D" id="3.30.230.10">
    <property type="match status" value="1"/>
</dbReference>
<dbReference type="Gene3D" id="3.30.70.890">
    <property type="entry name" value="GHMP kinase, C-terminal domain"/>
    <property type="match status" value="1"/>
</dbReference>
<dbReference type="HAMAP" id="MF_00061">
    <property type="entry name" value="IspE"/>
    <property type="match status" value="1"/>
</dbReference>
<dbReference type="InterPro" id="IPR013750">
    <property type="entry name" value="GHMP_kinase_C_dom"/>
</dbReference>
<dbReference type="InterPro" id="IPR036554">
    <property type="entry name" value="GHMP_kinase_C_sf"/>
</dbReference>
<dbReference type="InterPro" id="IPR006204">
    <property type="entry name" value="GHMP_kinase_N_dom"/>
</dbReference>
<dbReference type="InterPro" id="IPR004424">
    <property type="entry name" value="IspE"/>
</dbReference>
<dbReference type="InterPro" id="IPR020568">
    <property type="entry name" value="Ribosomal_Su5_D2-typ_SF"/>
</dbReference>
<dbReference type="InterPro" id="IPR014721">
    <property type="entry name" value="Ribsml_uS5_D2-typ_fold_subgr"/>
</dbReference>
<dbReference type="NCBIfam" id="TIGR00154">
    <property type="entry name" value="ispE"/>
    <property type="match status" value="1"/>
</dbReference>
<dbReference type="PANTHER" id="PTHR43527">
    <property type="entry name" value="4-DIPHOSPHOCYTIDYL-2-C-METHYL-D-ERYTHRITOL KINASE, CHLOROPLASTIC"/>
    <property type="match status" value="1"/>
</dbReference>
<dbReference type="PANTHER" id="PTHR43527:SF2">
    <property type="entry name" value="4-DIPHOSPHOCYTIDYL-2-C-METHYL-D-ERYTHRITOL KINASE, CHLOROPLASTIC"/>
    <property type="match status" value="1"/>
</dbReference>
<dbReference type="Pfam" id="PF08544">
    <property type="entry name" value="GHMP_kinases_C"/>
    <property type="match status" value="1"/>
</dbReference>
<dbReference type="Pfam" id="PF00288">
    <property type="entry name" value="GHMP_kinases_N"/>
    <property type="match status" value="1"/>
</dbReference>
<dbReference type="PIRSF" id="PIRSF010376">
    <property type="entry name" value="IspE"/>
    <property type="match status" value="1"/>
</dbReference>
<dbReference type="SUPFAM" id="SSF55060">
    <property type="entry name" value="GHMP Kinase, C-terminal domain"/>
    <property type="match status" value="1"/>
</dbReference>
<dbReference type="SUPFAM" id="SSF54211">
    <property type="entry name" value="Ribosomal protein S5 domain 2-like"/>
    <property type="match status" value="1"/>
</dbReference>
<keyword id="KW-0067">ATP-binding</keyword>
<keyword id="KW-0414">Isoprene biosynthesis</keyword>
<keyword id="KW-0418">Kinase</keyword>
<keyword id="KW-0547">Nucleotide-binding</keyword>
<keyword id="KW-0808">Transferase</keyword>
<protein>
    <recommendedName>
        <fullName evidence="1">4-diphosphocytidyl-2-C-methyl-D-erythritol kinase</fullName>
        <shortName evidence="1">CMK</shortName>
        <ecNumber evidence="1">2.7.1.148</ecNumber>
    </recommendedName>
    <alternativeName>
        <fullName evidence="1">4-(cytidine-5'-diphospho)-2-C-methyl-D-erythritol kinase</fullName>
    </alternativeName>
</protein>
<sequence length="291" mass="31592">MQSLSLRAHAKVNMHLWVGARRADGLHSIESVMQRITLADSLSLSRLDIPGRCEVCSPYMALPRENTLTRAYARFCQVTGVHDGVRVRVVKRIPAGSGLGGGSADAAALLCGLDTLFGTTLSARVLREVAYSVGSDVPFFLASQAACVLGGGEQLVPLVPKTGYLGLLVWPGLHSGSAQAYEDLDRLRACGVHAADGEQYSLRGATALSAHYAQDCARWRFFNSLDAPVQRRYPVVALARWDLARAGACFTAMSGSGSXVFGLYRDEEELRRAHKLLAKRWCWCVRVRLCG</sequence>
<comment type="function">
    <text evidence="1">Catalyzes the phosphorylation of the position 2 hydroxy group of 4-diphosphocytidyl-2C-methyl-D-erythritol.</text>
</comment>
<comment type="catalytic activity">
    <reaction evidence="1">
        <text>4-CDP-2-C-methyl-D-erythritol + ATP = 4-CDP-2-C-methyl-D-erythritol 2-phosphate + ADP + H(+)</text>
        <dbReference type="Rhea" id="RHEA:18437"/>
        <dbReference type="ChEBI" id="CHEBI:15378"/>
        <dbReference type="ChEBI" id="CHEBI:30616"/>
        <dbReference type="ChEBI" id="CHEBI:57823"/>
        <dbReference type="ChEBI" id="CHEBI:57919"/>
        <dbReference type="ChEBI" id="CHEBI:456216"/>
        <dbReference type="EC" id="2.7.1.148"/>
    </reaction>
</comment>
<comment type="pathway">
    <text evidence="1">Isoprenoid biosynthesis; isopentenyl diphosphate biosynthesis via DXP pathway; isopentenyl diphosphate from 1-deoxy-D-xylulose 5-phosphate: step 3/6.</text>
</comment>
<comment type="similarity">
    <text evidence="1">Belongs to the GHMP kinase family. IspE subfamily.</text>
</comment>